<dbReference type="EC" id="4.2.1.11" evidence="1"/>
<dbReference type="EMBL" id="CP001113">
    <property type="protein sequence ID" value="ACF61356.1"/>
    <property type="molecule type" value="Genomic_DNA"/>
</dbReference>
<dbReference type="RefSeq" id="WP_000036734.1">
    <property type="nucleotide sequence ID" value="NZ_CCMR01000001.1"/>
</dbReference>
<dbReference type="SMR" id="B4T483"/>
<dbReference type="GeneID" id="66757270"/>
<dbReference type="KEGG" id="see:SNSL254_A3168"/>
<dbReference type="HOGENOM" id="CLU_031223_2_1_6"/>
<dbReference type="UniPathway" id="UPA00109">
    <property type="reaction ID" value="UER00187"/>
</dbReference>
<dbReference type="Proteomes" id="UP000008824">
    <property type="component" value="Chromosome"/>
</dbReference>
<dbReference type="GO" id="GO:0009986">
    <property type="term" value="C:cell surface"/>
    <property type="evidence" value="ECO:0007669"/>
    <property type="project" value="UniProtKB-SubCell"/>
</dbReference>
<dbReference type="GO" id="GO:0005576">
    <property type="term" value="C:extracellular region"/>
    <property type="evidence" value="ECO:0007669"/>
    <property type="project" value="UniProtKB-SubCell"/>
</dbReference>
<dbReference type="GO" id="GO:0000015">
    <property type="term" value="C:phosphopyruvate hydratase complex"/>
    <property type="evidence" value="ECO:0007669"/>
    <property type="project" value="InterPro"/>
</dbReference>
<dbReference type="GO" id="GO:0000287">
    <property type="term" value="F:magnesium ion binding"/>
    <property type="evidence" value="ECO:0007669"/>
    <property type="project" value="UniProtKB-UniRule"/>
</dbReference>
<dbReference type="GO" id="GO:0004634">
    <property type="term" value="F:phosphopyruvate hydratase activity"/>
    <property type="evidence" value="ECO:0007669"/>
    <property type="project" value="UniProtKB-UniRule"/>
</dbReference>
<dbReference type="GO" id="GO:0006096">
    <property type="term" value="P:glycolytic process"/>
    <property type="evidence" value="ECO:0007669"/>
    <property type="project" value="UniProtKB-UniRule"/>
</dbReference>
<dbReference type="CDD" id="cd03313">
    <property type="entry name" value="enolase"/>
    <property type="match status" value="1"/>
</dbReference>
<dbReference type="FunFam" id="3.20.20.120:FF:000001">
    <property type="entry name" value="Enolase"/>
    <property type="match status" value="1"/>
</dbReference>
<dbReference type="FunFam" id="3.30.390.10:FF:000001">
    <property type="entry name" value="Enolase"/>
    <property type="match status" value="1"/>
</dbReference>
<dbReference type="Gene3D" id="3.20.20.120">
    <property type="entry name" value="Enolase-like C-terminal domain"/>
    <property type="match status" value="1"/>
</dbReference>
<dbReference type="Gene3D" id="3.30.390.10">
    <property type="entry name" value="Enolase-like, N-terminal domain"/>
    <property type="match status" value="1"/>
</dbReference>
<dbReference type="HAMAP" id="MF_00318">
    <property type="entry name" value="Enolase"/>
    <property type="match status" value="1"/>
</dbReference>
<dbReference type="InterPro" id="IPR000941">
    <property type="entry name" value="Enolase"/>
</dbReference>
<dbReference type="InterPro" id="IPR036849">
    <property type="entry name" value="Enolase-like_C_sf"/>
</dbReference>
<dbReference type="InterPro" id="IPR029017">
    <property type="entry name" value="Enolase-like_N"/>
</dbReference>
<dbReference type="InterPro" id="IPR020810">
    <property type="entry name" value="Enolase_C"/>
</dbReference>
<dbReference type="InterPro" id="IPR020809">
    <property type="entry name" value="Enolase_CS"/>
</dbReference>
<dbReference type="InterPro" id="IPR020811">
    <property type="entry name" value="Enolase_N"/>
</dbReference>
<dbReference type="NCBIfam" id="TIGR01060">
    <property type="entry name" value="eno"/>
    <property type="match status" value="1"/>
</dbReference>
<dbReference type="PANTHER" id="PTHR11902">
    <property type="entry name" value="ENOLASE"/>
    <property type="match status" value="1"/>
</dbReference>
<dbReference type="PANTHER" id="PTHR11902:SF1">
    <property type="entry name" value="ENOLASE"/>
    <property type="match status" value="1"/>
</dbReference>
<dbReference type="Pfam" id="PF00113">
    <property type="entry name" value="Enolase_C"/>
    <property type="match status" value="1"/>
</dbReference>
<dbReference type="Pfam" id="PF03952">
    <property type="entry name" value="Enolase_N"/>
    <property type="match status" value="1"/>
</dbReference>
<dbReference type="PIRSF" id="PIRSF001400">
    <property type="entry name" value="Enolase"/>
    <property type="match status" value="1"/>
</dbReference>
<dbReference type="PRINTS" id="PR00148">
    <property type="entry name" value="ENOLASE"/>
</dbReference>
<dbReference type="SFLD" id="SFLDF00002">
    <property type="entry name" value="enolase"/>
    <property type="match status" value="1"/>
</dbReference>
<dbReference type="SFLD" id="SFLDG00178">
    <property type="entry name" value="enolase"/>
    <property type="match status" value="1"/>
</dbReference>
<dbReference type="SMART" id="SM01192">
    <property type="entry name" value="Enolase_C"/>
    <property type="match status" value="1"/>
</dbReference>
<dbReference type="SMART" id="SM01193">
    <property type="entry name" value="Enolase_N"/>
    <property type="match status" value="1"/>
</dbReference>
<dbReference type="SUPFAM" id="SSF51604">
    <property type="entry name" value="Enolase C-terminal domain-like"/>
    <property type="match status" value="1"/>
</dbReference>
<dbReference type="SUPFAM" id="SSF54826">
    <property type="entry name" value="Enolase N-terminal domain-like"/>
    <property type="match status" value="1"/>
</dbReference>
<dbReference type="PROSITE" id="PS00164">
    <property type="entry name" value="ENOLASE"/>
    <property type="match status" value="1"/>
</dbReference>
<sequence length="432" mass="45599">MSKIVKVIGREIIDSRGNPTVEAEVHLEGGFVGMAAAPSGASTGSREALELRDGDKSRFLGKGVTKAVGAVNGPIAQAILGKDAKDQAGIDKIMIDLDGTENKSNFGANAILAVSLANAKAAAAAKGMPLYEHIAELNGTPGKYSMPVPMMNIINGGEHADNNVDIQEFMIQPVGAKTVKEAIRMGSEVFHHLAKVLKGKGMNTAVGDEGGYAPNLGSNAEALAVIAEAVKAAGYELGKDITLAMDCAASEFYKDGKYVLAGEGNKAFTSEEFTHFLEELTKQYPIVSIEDGLDESDWDGFAYQTKVLGDKIQLVGDDLFVTNTKILKEGIEKGIANSILIKFNQIGSLTETLAAIKMAKDAGYTAVISHRSGETEDATIADLAVGTAAGQIKTGSMSRSDRVAKYNQLIRIEEALGEKAPYNGRKEIKGQA</sequence>
<feature type="chain" id="PRO_1000115911" description="Enolase">
    <location>
        <begin position="1"/>
        <end position="432"/>
    </location>
</feature>
<feature type="active site" description="Proton donor" evidence="1">
    <location>
        <position position="209"/>
    </location>
</feature>
<feature type="active site" description="Proton acceptor" evidence="1">
    <location>
        <position position="342"/>
    </location>
</feature>
<feature type="binding site" evidence="1">
    <location>
        <position position="167"/>
    </location>
    <ligand>
        <name>(2R)-2-phosphoglycerate</name>
        <dbReference type="ChEBI" id="CHEBI:58289"/>
    </ligand>
</feature>
<feature type="binding site" evidence="1">
    <location>
        <position position="246"/>
    </location>
    <ligand>
        <name>Mg(2+)</name>
        <dbReference type="ChEBI" id="CHEBI:18420"/>
    </ligand>
</feature>
<feature type="binding site" evidence="1">
    <location>
        <position position="290"/>
    </location>
    <ligand>
        <name>Mg(2+)</name>
        <dbReference type="ChEBI" id="CHEBI:18420"/>
    </ligand>
</feature>
<feature type="binding site" evidence="1">
    <location>
        <position position="317"/>
    </location>
    <ligand>
        <name>Mg(2+)</name>
        <dbReference type="ChEBI" id="CHEBI:18420"/>
    </ligand>
</feature>
<feature type="binding site" evidence="1">
    <location>
        <position position="342"/>
    </location>
    <ligand>
        <name>(2R)-2-phosphoglycerate</name>
        <dbReference type="ChEBI" id="CHEBI:58289"/>
    </ligand>
</feature>
<feature type="binding site" evidence="1">
    <location>
        <position position="371"/>
    </location>
    <ligand>
        <name>(2R)-2-phosphoglycerate</name>
        <dbReference type="ChEBI" id="CHEBI:58289"/>
    </ligand>
</feature>
<feature type="binding site" evidence="1">
    <location>
        <position position="372"/>
    </location>
    <ligand>
        <name>(2R)-2-phosphoglycerate</name>
        <dbReference type="ChEBI" id="CHEBI:58289"/>
    </ligand>
</feature>
<feature type="binding site" evidence="1">
    <location>
        <position position="393"/>
    </location>
    <ligand>
        <name>(2R)-2-phosphoglycerate</name>
        <dbReference type="ChEBI" id="CHEBI:58289"/>
    </ligand>
</feature>
<protein>
    <recommendedName>
        <fullName evidence="1">Enolase</fullName>
        <ecNumber evidence="1">4.2.1.11</ecNumber>
    </recommendedName>
    <alternativeName>
        <fullName evidence="1">2-phospho-D-glycerate hydro-lyase</fullName>
    </alternativeName>
    <alternativeName>
        <fullName evidence="1">2-phosphoglycerate dehydratase</fullName>
    </alternativeName>
</protein>
<keyword id="KW-0963">Cytoplasm</keyword>
<keyword id="KW-0324">Glycolysis</keyword>
<keyword id="KW-0456">Lyase</keyword>
<keyword id="KW-0460">Magnesium</keyword>
<keyword id="KW-0479">Metal-binding</keyword>
<keyword id="KW-0964">Secreted</keyword>
<gene>
    <name evidence="1" type="primary">eno</name>
    <name type="ordered locus">SNSL254_A3168</name>
</gene>
<comment type="function">
    <text evidence="1">Catalyzes the reversible conversion of 2-phosphoglycerate (2-PG) into phosphoenolpyruvate (PEP). It is essential for the degradation of carbohydrates via glycolysis.</text>
</comment>
<comment type="catalytic activity">
    <reaction evidence="1">
        <text>(2R)-2-phosphoglycerate = phosphoenolpyruvate + H2O</text>
        <dbReference type="Rhea" id="RHEA:10164"/>
        <dbReference type="ChEBI" id="CHEBI:15377"/>
        <dbReference type="ChEBI" id="CHEBI:58289"/>
        <dbReference type="ChEBI" id="CHEBI:58702"/>
        <dbReference type="EC" id="4.2.1.11"/>
    </reaction>
</comment>
<comment type="cofactor">
    <cofactor evidence="1">
        <name>Mg(2+)</name>
        <dbReference type="ChEBI" id="CHEBI:18420"/>
    </cofactor>
    <text evidence="1">Binds a second Mg(2+) ion via substrate during catalysis.</text>
</comment>
<comment type="pathway">
    <text evidence="1">Carbohydrate degradation; glycolysis; pyruvate from D-glyceraldehyde 3-phosphate: step 4/5.</text>
</comment>
<comment type="subunit">
    <text evidence="1">Component of the RNA degradosome, a multiprotein complex involved in RNA processing and mRNA degradation.</text>
</comment>
<comment type="subcellular location">
    <subcellularLocation>
        <location evidence="1">Cytoplasm</location>
    </subcellularLocation>
    <subcellularLocation>
        <location evidence="1">Secreted</location>
    </subcellularLocation>
    <subcellularLocation>
        <location evidence="1">Cell surface</location>
    </subcellularLocation>
    <text evidence="1">Fractions of enolase are present in both the cytoplasm and on the cell surface.</text>
</comment>
<comment type="similarity">
    <text evidence="1">Belongs to the enolase family.</text>
</comment>
<reference key="1">
    <citation type="journal article" date="2011" name="J. Bacteriol.">
        <title>Comparative genomics of 28 Salmonella enterica isolates: evidence for CRISPR-mediated adaptive sublineage evolution.</title>
        <authorList>
            <person name="Fricke W.F."/>
            <person name="Mammel M.K."/>
            <person name="McDermott P.F."/>
            <person name="Tartera C."/>
            <person name="White D.G."/>
            <person name="Leclerc J.E."/>
            <person name="Ravel J."/>
            <person name="Cebula T.A."/>
        </authorList>
    </citation>
    <scope>NUCLEOTIDE SEQUENCE [LARGE SCALE GENOMIC DNA]</scope>
    <source>
        <strain>SL254</strain>
    </source>
</reference>
<organism>
    <name type="scientific">Salmonella newport (strain SL254)</name>
    <dbReference type="NCBI Taxonomy" id="423368"/>
    <lineage>
        <taxon>Bacteria</taxon>
        <taxon>Pseudomonadati</taxon>
        <taxon>Pseudomonadota</taxon>
        <taxon>Gammaproteobacteria</taxon>
        <taxon>Enterobacterales</taxon>
        <taxon>Enterobacteriaceae</taxon>
        <taxon>Salmonella</taxon>
    </lineage>
</organism>
<evidence type="ECO:0000255" key="1">
    <source>
        <dbReference type="HAMAP-Rule" id="MF_00318"/>
    </source>
</evidence>
<name>ENO_SALNS</name>
<proteinExistence type="inferred from homology"/>
<accession>B4T483</accession>